<feature type="chain" id="PRO_0000441934" description="3-methylorcinaldehyde synthase">
    <location>
        <begin position="1"/>
        <end position="2729"/>
    </location>
</feature>
<feature type="domain" description="Ketosynthase family 3 (KS3)" evidence="3 13">
    <location>
        <begin position="397"/>
        <end position="828"/>
    </location>
</feature>
<feature type="domain" description="PKS/mFAS DH" evidence="4">
    <location>
        <begin position="1345"/>
        <end position="1669"/>
    </location>
</feature>
<feature type="domain" description="Carrier" evidence="2 13">
    <location>
        <begin position="1750"/>
        <end position="1824"/>
    </location>
</feature>
<feature type="region of interest" description="N-terminal acylcarrier protein transacylase domain (SAT)" evidence="1 13">
    <location>
        <begin position="99"/>
        <end position="238"/>
    </location>
</feature>
<feature type="region of interest" description="Disordered" evidence="6">
    <location>
        <begin position="361"/>
        <end position="391"/>
    </location>
</feature>
<feature type="region of interest" description="Malonyl-CoA:ACP transacylase (MAT) domain" evidence="1 13">
    <location>
        <begin position="942"/>
        <end position="1230"/>
    </location>
</feature>
<feature type="region of interest" description="N-terminal hotdog fold" evidence="4">
    <location>
        <begin position="1345"/>
        <end position="1479"/>
    </location>
</feature>
<feature type="region of interest" description="Product template (PT) domain" evidence="1 13">
    <location>
        <begin position="1374"/>
        <end position="1665"/>
    </location>
</feature>
<feature type="region of interest" description="C-terminal hotdog fold" evidence="4">
    <location>
        <begin position="1513"/>
        <end position="1669"/>
    </location>
</feature>
<feature type="region of interest" description="Disordered" evidence="6">
    <location>
        <begin position="1682"/>
        <end position="1726"/>
    </location>
</feature>
<feature type="region of interest" description="Disordered" evidence="6">
    <location>
        <begin position="1835"/>
        <end position="1874"/>
    </location>
</feature>
<feature type="region of interest" description="Methyltransferase (C-MeT) domain" evidence="1 8 13">
    <location>
        <begin position="2086"/>
        <end position="2254"/>
    </location>
</feature>
<feature type="region of interest" description="Reductase (R) domain" evidence="8 13">
    <location>
        <begin position="2344"/>
        <end position="2599"/>
    </location>
</feature>
<feature type="compositionally biased region" description="Polar residues" evidence="6">
    <location>
        <begin position="361"/>
        <end position="373"/>
    </location>
</feature>
<feature type="compositionally biased region" description="Low complexity" evidence="6">
    <location>
        <begin position="1682"/>
        <end position="1701"/>
    </location>
</feature>
<feature type="compositionally biased region" description="Polar residues" evidence="6">
    <location>
        <begin position="1707"/>
        <end position="1716"/>
    </location>
</feature>
<feature type="compositionally biased region" description="Low complexity" evidence="6">
    <location>
        <begin position="1835"/>
        <end position="1868"/>
    </location>
</feature>
<feature type="active site" description="For beta-ketoacyl synthase activity" evidence="3">
    <location>
        <position position="571"/>
    </location>
</feature>
<feature type="active site" description="For beta-ketoacyl synthase activity" evidence="3">
    <location>
        <position position="706"/>
    </location>
</feature>
<feature type="active site" description="For beta-ketoacyl synthase activity" evidence="3">
    <location>
        <position position="748"/>
    </location>
</feature>
<feature type="active site" description="For acyl/malonyl transferase activity" evidence="5">
    <location>
        <position position="1029"/>
    </location>
</feature>
<feature type="active site" description="Proton acceptor; for dehydratase activity" evidence="4">
    <location>
        <position position="1380"/>
    </location>
</feature>
<feature type="active site" description="Proton donor; for dehydratase activity" evidence="4">
    <location>
        <position position="1575"/>
    </location>
</feature>
<feature type="modified residue" description="O-(pantetheine 4'-phosphoryl)serine" evidence="2">
    <location>
        <position position="1784"/>
    </location>
</feature>
<comment type="function">
    <text evidence="7 8 9">Non-reducing polyketide synthase; part of the gene cluster that mediates the biosynthesis of xenovulene A, an unusual meroterpenoid that has potent inhibitory effects on the human gamma-aminobutyrate A (GABAA) benzodiazepine receptor (PubMed:17912413, PubMed:20552126, PubMed:29773797). The first step of xenovulene A biosynthesis is the biosynthesis of 3-methylorcinaldehyde performed by the non-reducing polyketide synthase aspks1 (PubMed:17912413, PubMed:20552126, PubMed:29773797). The salicylate hydroxylase asL1 then catalyzes the oxidative dearomatization of 3-methylorcinaldehyde to yield a dearomatized hydroxycyclohexadione (PubMed:29773797). The 2-oxoglutarate-dependent dioxygenase asL3 further catalyzes the oxidative ring expansion to provide the first tropolone metabolite (PubMed:29773797). The cytochrome P450 monooxygenase asR2 allows the synthesis of tropolone hemiacetal (PubMed:29773797). In parallel, a previously unrecognised class of terpene cyclase, asR6, produces alpha-humulene from farnesylpyrophosphate (FPP) (PubMed:29773797). The putative Diels-Alderase asR5 probably catalyzes the formation of the tropolone-humulene skeleton by linking humulene and the polyketide moiety (PubMed:29773797). Oxidative-ring contractions catalyzed by asL4 and asL6 then processively remove carbon atoms from the polyketide to yield xenovulene A (PubMed:29773797).</text>
</comment>
<comment type="pathway">
    <text evidence="7 8 9">Secondary metabolite biosynthesis; terpenoid biosynthesis.</text>
</comment>
<comment type="induction">
    <text evidence="9">Expression is significantly up-regulated under xenovulene A producing condition.</text>
</comment>
<comment type="domain">
    <text evidence="8">Multidomain protein; including a starter unit:ACP transacylase (SAT) that selects the starter unit; a ketosynthase (KS) that catalyzes repeated decarboxylative condensation to elongate the polyketide backbone; a malonyl-CoA:ACP transacylase (MAT) that selects and transfers the extender unit malonyl-CoA; a product template (PT) domain that controls the immediate cyclization regioselectivity of the reactive polyketide backbone; an acyl-carrier protein (ACP) that serves as the tether of the growing and completed polyketide via its phosphopantetheinyl arm; a C-methylation (C-Met) domain; and a C-terminal reductase (R) domain (PubMed:20552126). Methylation occurs during the processive construction of the carbon backbone, directly after the second extension at the triketide stage (PubMed:20552126). The C-terminal R domain is involved in a reductive release mechanism, reducing the thiolester intermediate to the observed aldehyde and concomitantly releasing the free holo-ACP thiol (PubMed:20552126).</text>
</comment>
<comment type="disruption phenotype">
    <text evidence="9">Leads to the loss of production of xenovulene A and its related compounds.</text>
</comment>
<comment type="biotechnology">
    <text evidence="10">Xenovulene A is a natural product exhibiting little structural resemblance with classical benzodiazepines yet is able to displace high-affinity ligand binding to the benzodiazepine site of the gamma-aminobutyrate A (GABAA) receptor and could be potentially used as an anti-depressant with reduced addictive properties.</text>
</comment>
<gene>
    <name evidence="12" type="primary">aspks1</name>
    <name evidence="11" type="synonym">pks1</name>
</gene>
<reference key="1">
    <citation type="journal article" date="2007" name="Chem. Commun. (Camb.)">
        <title>Characterisation of 3-methylorcinaldehyde synthase (MOS) in Acremonium strictum: first observation of a reductive release mechanism during polyketide biosynthesis.</title>
        <authorList>
            <person name="Bailey A.M."/>
            <person name="Cox R.J."/>
            <person name="Harley K."/>
            <person name="Lazarus C.M."/>
            <person name="Simpson T.J."/>
            <person name="Skellam E."/>
        </authorList>
    </citation>
    <scope>NUCLEOTIDE SEQUENCE [GENOMIC DNA]</scope>
    <scope>DOMAIN</scope>
    <scope>FUNCTION</scope>
    <scope>CATALYTIC ACTIVITY</scope>
    <scope>PATHWAY</scope>
</reference>
<reference key="2">
    <citation type="journal article" date="2018" name="Nat. Commun.">
        <title>Three previously unrecognised classes of biosynthetic enzymes revealed during the production of xenovulene A.</title>
        <authorList>
            <person name="Schor R."/>
            <person name="Schotte C."/>
            <person name="Wibberg D."/>
            <person name="Kalinowski J."/>
            <person name="Cox R.J."/>
        </authorList>
    </citation>
    <scope>NUCLEOTIDE SEQUENCE [GENOMIC DNA]</scope>
    <scope>INDUCTIONY</scope>
    <scope>FUNCTION</scope>
    <scope>DISRUPTION PHENOTYPE</scope>
    <scope>PATHWAY</scope>
</reference>
<reference key="3">
    <citation type="journal article" date="1997" name="J. Pharmacol. Exp. Ther.">
        <title>Regulation of neuronal and recombinant GABA(A) receptor ion channels by xenovulene A, a natural product isolated from Acremonium strictum.</title>
        <authorList>
            <person name="Thomas P."/>
            <person name="Sundaram H."/>
            <person name="Krishek B.J."/>
            <person name="Chazot P."/>
            <person name="Xie X."/>
            <person name="Bevan P."/>
            <person name="Brocchini S.J."/>
            <person name="Latham C.J."/>
            <person name="Charlton P."/>
            <person name="Moore M."/>
            <person name="Lewis S.J."/>
            <person name="Thornton D.M."/>
            <person name="Stephenson F.A."/>
            <person name="Smart T.G."/>
        </authorList>
    </citation>
    <scope>BIOTECHNOLOGY</scope>
</reference>
<reference key="4">
    <citation type="journal article" date="2010" name="Chem. Commun. (Camb.)">
        <title>Catalytic role of the C-terminal domains of a fungal non-reducing polyketide synthase.</title>
        <authorList>
            <person name="Fisch K.M."/>
            <person name="Skellam E."/>
            <person name="Ivison D."/>
            <person name="Cox R.J."/>
            <person name="Bailey A.M."/>
            <person name="Lazarus C.M."/>
            <person name="Simpson T.J."/>
        </authorList>
    </citation>
    <scope>FUNCTION</scope>
    <scope>DOMAIN</scope>
    <scope>CATALYTIC ACTIVITY</scope>
    <scope>PATHWAY</scope>
</reference>
<protein>
    <recommendedName>
        <fullName evidence="11">3-methylorcinaldehyde synthase</fullName>
        <shortName evidence="11">MOS</shortName>
        <ecNumber evidence="7 8 9">2.3.1.-</ecNumber>
    </recommendedName>
    <alternativeName>
        <fullName evidence="11">Non-reducing polyketide synthase 1</fullName>
    </alternativeName>
    <alternativeName>
        <fullName evidence="12">Xenovulene A biosynthesis cluster protein aspks1</fullName>
    </alternativeName>
</protein>
<accession>A5PHD6</accession>
<accession>A0A2U8U2L1</accession>
<dbReference type="EC" id="2.3.1.-" evidence="7 8 9"/>
<dbReference type="EMBL" id="JQ012797">
    <property type="protein sequence ID" value="AFD18255.1"/>
    <property type="molecule type" value="Genomic_DNA"/>
</dbReference>
<dbReference type="EMBL" id="AM745350">
    <property type="protein sequence ID" value="CAN87161.2"/>
    <property type="molecule type" value="Genomic_DNA"/>
</dbReference>
<dbReference type="EMBL" id="MG736817">
    <property type="protein sequence ID" value="AWM95789.1"/>
    <property type="molecule type" value="Genomic_DNA"/>
</dbReference>
<dbReference type="SMR" id="A5PHD6"/>
<dbReference type="BioCyc" id="MetaCyc:MONOMER-19385"/>
<dbReference type="UniPathway" id="UPA00213"/>
<dbReference type="GO" id="GO:0004315">
    <property type="term" value="F:3-oxoacyl-[acyl-carrier-protein] synthase activity"/>
    <property type="evidence" value="ECO:0007669"/>
    <property type="project" value="InterPro"/>
</dbReference>
<dbReference type="GO" id="GO:0008168">
    <property type="term" value="F:methyltransferase activity"/>
    <property type="evidence" value="ECO:0007669"/>
    <property type="project" value="UniProtKB-KW"/>
</dbReference>
<dbReference type="GO" id="GO:0031177">
    <property type="term" value="F:phosphopantetheine binding"/>
    <property type="evidence" value="ECO:0007669"/>
    <property type="project" value="InterPro"/>
</dbReference>
<dbReference type="GO" id="GO:0006633">
    <property type="term" value="P:fatty acid biosynthetic process"/>
    <property type="evidence" value="ECO:0007669"/>
    <property type="project" value="InterPro"/>
</dbReference>
<dbReference type="GO" id="GO:0032259">
    <property type="term" value="P:methylation"/>
    <property type="evidence" value="ECO:0007669"/>
    <property type="project" value="UniProtKB-KW"/>
</dbReference>
<dbReference type="GO" id="GO:0016114">
    <property type="term" value="P:terpenoid biosynthetic process"/>
    <property type="evidence" value="ECO:0007669"/>
    <property type="project" value="UniProtKB-UniPathway"/>
</dbReference>
<dbReference type="CDD" id="cd00833">
    <property type="entry name" value="PKS"/>
    <property type="match status" value="1"/>
</dbReference>
<dbReference type="Gene3D" id="3.30.70.3290">
    <property type="match status" value="1"/>
</dbReference>
<dbReference type="Gene3D" id="3.40.47.10">
    <property type="match status" value="1"/>
</dbReference>
<dbReference type="Gene3D" id="1.10.1200.10">
    <property type="entry name" value="ACP-like"/>
    <property type="match status" value="1"/>
</dbReference>
<dbReference type="Gene3D" id="3.40.366.10">
    <property type="entry name" value="Malonyl-Coenzyme A Acyl Carrier Protein, domain 2"/>
    <property type="match status" value="2"/>
</dbReference>
<dbReference type="Gene3D" id="3.40.50.720">
    <property type="entry name" value="NAD(P)-binding Rossmann-like Domain"/>
    <property type="match status" value="1"/>
</dbReference>
<dbReference type="Gene3D" id="3.10.129.110">
    <property type="entry name" value="Polyketide synthase dehydratase"/>
    <property type="match status" value="1"/>
</dbReference>
<dbReference type="Gene3D" id="3.40.50.150">
    <property type="entry name" value="Vaccinia Virus protein VP39"/>
    <property type="match status" value="1"/>
</dbReference>
<dbReference type="InterPro" id="IPR001227">
    <property type="entry name" value="Ac_transferase_dom_sf"/>
</dbReference>
<dbReference type="InterPro" id="IPR036736">
    <property type="entry name" value="ACP-like_sf"/>
</dbReference>
<dbReference type="InterPro" id="IPR014043">
    <property type="entry name" value="Acyl_transferase_dom"/>
</dbReference>
<dbReference type="InterPro" id="IPR016035">
    <property type="entry name" value="Acyl_Trfase/lysoPLipase"/>
</dbReference>
<dbReference type="InterPro" id="IPR013120">
    <property type="entry name" value="Far_NAD-bd"/>
</dbReference>
<dbReference type="InterPro" id="IPR018201">
    <property type="entry name" value="Ketoacyl_synth_AS"/>
</dbReference>
<dbReference type="InterPro" id="IPR014031">
    <property type="entry name" value="Ketoacyl_synth_C"/>
</dbReference>
<dbReference type="InterPro" id="IPR014030">
    <property type="entry name" value="Ketoacyl_synth_N"/>
</dbReference>
<dbReference type="InterPro" id="IPR016036">
    <property type="entry name" value="Malonyl_transacylase_ACP-bd"/>
</dbReference>
<dbReference type="InterPro" id="IPR013217">
    <property type="entry name" value="Methyltransf_12"/>
</dbReference>
<dbReference type="InterPro" id="IPR036291">
    <property type="entry name" value="NAD(P)-bd_dom_sf"/>
</dbReference>
<dbReference type="InterPro" id="IPR020841">
    <property type="entry name" value="PKS_Beta-ketoAc_synthase_dom"/>
</dbReference>
<dbReference type="InterPro" id="IPR042104">
    <property type="entry name" value="PKS_dehydratase_sf"/>
</dbReference>
<dbReference type="InterPro" id="IPR049900">
    <property type="entry name" value="PKS_mFAS_DH"/>
</dbReference>
<dbReference type="InterPro" id="IPR020806">
    <property type="entry name" value="PKS_PP-bd"/>
</dbReference>
<dbReference type="InterPro" id="IPR050444">
    <property type="entry name" value="Polyketide_Synthase"/>
</dbReference>
<dbReference type="InterPro" id="IPR009081">
    <property type="entry name" value="PP-bd_ACP"/>
</dbReference>
<dbReference type="InterPro" id="IPR006162">
    <property type="entry name" value="Ppantetheine_attach_site"/>
</dbReference>
<dbReference type="InterPro" id="IPR029063">
    <property type="entry name" value="SAM-dependent_MTases_sf"/>
</dbReference>
<dbReference type="InterPro" id="IPR032088">
    <property type="entry name" value="SAT"/>
</dbReference>
<dbReference type="InterPro" id="IPR016039">
    <property type="entry name" value="Thiolase-like"/>
</dbReference>
<dbReference type="PANTHER" id="PTHR45681:SF6">
    <property type="entry name" value="POLYKETIDE SYNTHASE 37"/>
    <property type="match status" value="1"/>
</dbReference>
<dbReference type="PANTHER" id="PTHR45681">
    <property type="entry name" value="POLYKETIDE SYNTHASE 44-RELATED"/>
    <property type="match status" value="1"/>
</dbReference>
<dbReference type="Pfam" id="PF00698">
    <property type="entry name" value="Acyl_transf_1"/>
    <property type="match status" value="1"/>
</dbReference>
<dbReference type="Pfam" id="PF18558">
    <property type="entry name" value="HTH_51"/>
    <property type="match status" value="1"/>
</dbReference>
<dbReference type="Pfam" id="PF00109">
    <property type="entry name" value="ketoacyl-synt"/>
    <property type="match status" value="1"/>
</dbReference>
<dbReference type="Pfam" id="PF02801">
    <property type="entry name" value="Ketoacyl-synt_C"/>
    <property type="match status" value="1"/>
</dbReference>
<dbReference type="Pfam" id="PF08242">
    <property type="entry name" value="Methyltransf_12"/>
    <property type="match status" value="1"/>
</dbReference>
<dbReference type="Pfam" id="PF07993">
    <property type="entry name" value="NAD_binding_4"/>
    <property type="match status" value="1"/>
</dbReference>
<dbReference type="Pfam" id="PF00550">
    <property type="entry name" value="PP-binding"/>
    <property type="match status" value="1"/>
</dbReference>
<dbReference type="Pfam" id="PF16073">
    <property type="entry name" value="SAT"/>
    <property type="match status" value="1"/>
</dbReference>
<dbReference type="SMART" id="SM00827">
    <property type="entry name" value="PKS_AT"/>
    <property type="match status" value="1"/>
</dbReference>
<dbReference type="SMART" id="SM00825">
    <property type="entry name" value="PKS_KS"/>
    <property type="match status" value="1"/>
</dbReference>
<dbReference type="SMART" id="SM00823">
    <property type="entry name" value="PKS_PP"/>
    <property type="match status" value="1"/>
</dbReference>
<dbReference type="SUPFAM" id="SSF47336">
    <property type="entry name" value="ACP-like"/>
    <property type="match status" value="1"/>
</dbReference>
<dbReference type="SUPFAM" id="SSF52151">
    <property type="entry name" value="FabD/lysophospholipase-like"/>
    <property type="match status" value="1"/>
</dbReference>
<dbReference type="SUPFAM" id="SSF51735">
    <property type="entry name" value="NAD(P)-binding Rossmann-fold domains"/>
    <property type="match status" value="1"/>
</dbReference>
<dbReference type="SUPFAM" id="SSF55048">
    <property type="entry name" value="Probable ACP-binding domain of malonyl-CoA ACP transacylase"/>
    <property type="match status" value="1"/>
</dbReference>
<dbReference type="SUPFAM" id="SSF53335">
    <property type="entry name" value="S-adenosyl-L-methionine-dependent methyltransferases"/>
    <property type="match status" value="1"/>
</dbReference>
<dbReference type="SUPFAM" id="SSF53901">
    <property type="entry name" value="Thiolase-like"/>
    <property type="match status" value="1"/>
</dbReference>
<dbReference type="PROSITE" id="PS50075">
    <property type="entry name" value="CARRIER"/>
    <property type="match status" value="1"/>
</dbReference>
<dbReference type="PROSITE" id="PS00606">
    <property type="entry name" value="KS3_1"/>
    <property type="match status" value="1"/>
</dbReference>
<dbReference type="PROSITE" id="PS52004">
    <property type="entry name" value="KS3_2"/>
    <property type="match status" value="1"/>
</dbReference>
<dbReference type="PROSITE" id="PS00012">
    <property type="entry name" value="PHOSPHOPANTETHEINE"/>
    <property type="match status" value="1"/>
</dbReference>
<dbReference type="PROSITE" id="PS52019">
    <property type="entry name" value="PKS_MFAS_DH"/>
    <property type="match status" value="1"/>
</dbReference>
<organism>
    <name type="scientific">Sarocladium schorii</name>
    <name type="common">Acremonium strictum (strain IMI 501407)</name>
    <dbReference type="NCBI Taxonomy" id="2203296"/>
    <lineage>
        <taxon>Eukaryota</taxon>
        <taxon>Fungi</taxon>
        <taxon>Dikarya</taxon>
        <taxon>Ascomycota</taxon>
        <taxon>Pezizomycotina</taxon>
        <taxon>Sordariomycetes</taxon>
        <taxon>Hypocreomycetidae</taxon>
        <taxon>Hypocreales</taxon>
        <taxon>Sarocladiaceae</taxon>
        <taxon>Sarocladium</taxon>
    </lineage>
</organism>
<proteinExistence type="evidence at protein level"/>
<evidence type="ECO:0000255" key="1"/>
<evidence type="ECO:0000255" key="2">
    <source>
        <dbReference type="PROSITE-ProRule" id="PRU00258"/>
    </source>
</evidence>
<evidence type="ECO:0000255" key="3">
    <source>
        <dbReference type="PROSITE-ProRule" id="PRU01348"/>
    </source>
</evidence>
<evidence type="ECO:0000255" key="4">
    <source>
        <dbReference type="PROSITE-ProRule" id="PRU01363"/>
    </source>
</evidence>
<evidence type="ECO:0000255" key="5">
    <source>
        <dbReference type="PROSITE-ProRule" id="PRU10022"/>
    </source>
</evidence>
<evidence type="ECO:0000256" key="6">
    <source>
        <dbReference type="SAM" id="MobiDB-lite"/>
    </source>
</evidence>
<evidence type="ECO:0000269" key="7">
    <source>
    </source>
</evidence>
<evidence type="ECO:0000269" key="8">
    <source>
    </source>
</evidence>
<evidence type="ECO:0000269" key="9">
    <source>
    </source>
</evidence>
<evidence type="ECO:0000269" key="10">
    <source>
    </source>
</evidence>
<evidence type="ECO:0000303" key="11">
    <source>
    </source>
</evidence>
<evidence type="ECO:0000303" key="12">
    <source>
    </source>
</evidence>
<evidence type="ECO:0000305" key="13">
    <source>
    </source>
</evidence>
<name>PKS1_SARSH</name>
<sequence length="2729" mass="296115">MAAHGQTSKRGNNTLLLFGALVQSHDVSTLRSMRESIVVQHGEHSWLVDSIKALPQDFEAALPHLPFFDQATTTTIHQLLVDAVSSFLTGSFETLVSPLPAALLIPLAVATQLAHYVEYSRQSPTGLAEGKEALGFCTGILSAFAVASSHDVCDLAKYGAAAMRLGMLVGLVVDCEDAAAGQGRYRSVSAGWDSEEKHAAMLKIVQSFEEAYVSVHFDKNRATITTSPGTISNLTRQLQKEGLVASDMGLLGRFHFAGSTKPREVTVDQLVSFCNSPAGALFRLPDADSLRLATRINDRDGGLITQGSLHEHALQSILVKLAAWFETFSSATTTQANTGAQNGRARPQIVDFGPQNSVPHSLASTVDINSGNGKTRRVKPADAQSSANSTHTRPWLDTDIAIVGMSCKVPGAENLEEFWDLLVSGKSQHQEISGQEGGRFDFGDTAFRTAADQRRRWFANLVSNHDQFDHRFFKKSARESASMDPQQRHILQVAYQAVEGSGYFNKSSSSTPTNANIGCYVGLCLGDYESNVASHPATAFTATGNLQGFVSGKVSHYFGWTGPAVTVNTACSSSLVAVHLACQAILSGECEAALAGGSHIMTSATWFQNLAGGSFLSPTGACKPFDSKADGYCRGEGVGAVFLKRMSQAMADGDMVLGVVAATGVQQNQNCTPIFVPNAPSLENLFSRVMTKARVKPADISVVEGHGTGTAVGDPAEYDAIRKALGGTTHRSADKPLMLSSVKGLVGHMECTSGVIGMIKLLLMMNKGALPPQASFQSINPALGATPADHMFIPTRPQPWVVPAGGFRAALLNNYGASGSNASAVLVQSPSMSFRPEITVGSRPAAGIKFPFWLAAFDKKSLSRYVKALRKWLCRLDGDQSLASLSFNLARQSNRTMQANLVLTARSIEALDQSLADFENGNDGSFIERTPASSQPTVILCFGGQVSCFVGLDKQVYQDMALVRYYLDRVDAVIQCQGGRSIFPGIFNRSPPSKVDIVHLHTMLFAMQYASARCWIDSGVKPAALVGHSFGTLTALCISGILSLEDTIKAIMCRAKLLNEAWGPDQGGMIAVEGDIDVIEELLDEANKNHDDKPATIACYNGPTSFTLAGSTTAMDAVAAQLKNGAKYSKGMKSKRIYVTHAFHSVLVDPLLEELTQRVADSGVRFRKPIIPVELSTEQHMSESELTSEFMANHMRQPVYFHHAVERLARRYAGGSSPCVFLEAGTNSSVCNMASRALGSTEFVTKSSSLSFHGVNIANCDAGWNKLTDTTVNLWETGVRVHHWAHHGVQQMHQTDIKPLLVPPYQFDPDSRHWIDLKVPRKALMETDEADAGGKKQSDAEKLPETILTFHSSDAVGAQKQARFRVNTMLEEYKQLLRGHMTLETAPILSATLQINLVIEAISSTQPEYKSSKSQPQIQDVVYQSPVCFNSANTLWVEVTNVSGQWMFQVFSTTTQELSPKSTRMVHTKGTVAFKNPGDAEIRRQLMSYERLFSHGRATDLLQNSNASTAPIDEMLGNQSIYRIFSEIVSYGPEFRGLQKMVSRGNETAGHVVHLKHQDSASTEAEPWFDPHLADTFCQLGGLWVNCMMPERERGNGHVYLANGIDQWIRGYPAASTDRPEAFNVFAVNKQASEQLTLTDVFVFNAADGALVEVILGIAYVKIARPSMEKLLARLTEPSWVAGGKTTPQTATKPAAAPVVADHTPRTTESASTVNGVNLDDRKPEGTALPQEMLSDTEELRPKAQGQELQDMIARVKAVMADISGLDISEIKDDSNLADLGIDSLVGMEMTHEIESTLKVELPESEIMSVVDMEGLLQCVAGALGLSMTGASSDTLTASSDSGINSAKSSILSGTSTSTSTGTTDTGSDVGQSMKEPSLMLDTVKKAFAQTKEATDARIKAASNQVSYCSTSLPQQNELSVLLTITALEALGAGFSTARPGSQLTRISHAPGHEQFVTHLYKEIETATQIIKIDGHGAQAVITRTAVPLPDVESRQVALCEQMLRGDPEQVGTMELIKHAGENLHRVLSGETDGAKVIFGSKTGSKLVSQWYAQWPLNRSLIAQMGDFLTAVVAGIQADEDMPFSEINPLRIMETGAGTGGTTKQIVPLLARLGLPVVYTFTDLAPSFVAAARKTWGKEYPWMQFRTLDMEKTPPSVEDGLPLQHFIVSANAVHATKSISATTGNLRKALRTDGFLLMMEMTRTPFWVDLIFGLFEGWWLFEDGRKHALTHEALWDQELSKVGFGYVDWTEGMTAESEIQKIILASADANTRLERVRLPASHTDYHLNQVGVENEARELMVADYVSTLTKEFNKTMTQYTDAGLSLSSRTSQTPMSSQKRCILITGGTGGLGAHLVAEAALLPDVNMVICLNRPNRKQEARERQLVSLEKKGLILSPEALAKITVFETDLSQPGSLGLSDDKYNLLRGNVTHIIHNAWLMHSKWPVRRFEPQLRIMAHMLNLAADIATCQRTQGQRQPGPPVSFVFVSSIATVGYHPVVTNPGNPAVPETRIPISSVLPTGYGEAKYICERMLDATLHQYPAQFRASAVRLGQIAGSEINGHWNSAEHISFLVKSSQSIGALPALPGPMGWTPADYVARGLVEIATQPDNIELYPIYHIENPVRQPWDEALAVLADEMGISSEALPFQEWVQTVRDWPRQGDNTAAGANPAYLLVDFLEDHFLRMSCGGLLLGTAKAREHSPSLAGMGPVSDELLRLFVRSWKEVGFLL</sequence>
<keyword id="KW-0012">Acyltransferase</keyword>
<keyword id="KW-0489">Methyltransferase</keyword>
<keyword id="KW-0511">Multifunctional enzyme</keyword>
<keyword id="KW-0596">Phosphopantetheine</keyword>
<keyword id="KW-0597">Phosphoprotein</keyword>
<keyword id="KW-0808">Transferase</keyword>